<accession>A6VFN7</accession>
<gene>
    <name evidence="1" type="primary">gatB</name>
    <name type="ordered locus">MmarC7_0193</name>
</gene>
<comment type="function">
    <text evidence="1">Allows the formation of correctly charged Asn-tRNA(Asn) or Gln-tRNA(Gln) through the transamidation of misacylated Asp-tRNA(Asn) or Glu-tRNA(Gln) in organisms which lack either or both of asparaginyl-tRNA or glutaminyl-tRNA synthetases. The reaction takes place in the presence of glutamine and ATP through an activated phospho-Asp-tRNA(Asn) or phospho-Glu-tRNA(Gln).</text>
</comment>
<comment type="catalytic activity">
    <reaction evidence="1">
        <text>L-glutamyl-tRNA(Gln) + L-glutamine + ATP + H2O = L-glutaminyl-tRNA(Gln) + L-glutamate + ADP + phosphate + H(+)</text>
        <dbReference type="Rhea" id="RHEA:17521"/>
        <dbReference type="Rhea" id="RHEA-COMP:9681"/>
        <dbReference type="Rhea" id="RHEA-COMP:9684"/>
        <dbReference type="ChEBI" id="CHEBI:15377"/>
        <dbReference type="ChEBI" id="CHEBI:15378"/>
        <dbReference type="ChEBI" id="CHEBI:29985"/>
        <dbReference type="ChEBI" id="CHEBI:30616"/>
        <dbReference type="ChEBI" id="CHEBI:43474"/>
        <dbReference type="ChEBI" id="CHEBI:58359"/>
        <dbReference type="ChEBI" id="CHEBI:78520"/>
        <dbReference type="ChEBI" id="CHEBI:78521"/>
        <dbReference type="ChEBI" id="CHEBI:456216"/>
    </reaction>
</comment>
<comment type="catalytic activity">
    <reaction evidence="1">
        <text>L-aspartyl-tRNA(Asn) + L-glutamine + ATP + H2O = L-asparaginyl-tRNA(Asn) + L-glutamate + ADP + phosphate + 2 H(+)</text>
        <dbReference type="Rhea" id="RHEA:14513"/>
        <dbReference type="Rhea" id="RHEA-COMP:9674"/>
        <dbReference type="Rhea" id="RHEA-COMP:9677"/>
        <dbReference type="ChEBI" id="CHEBI:15377"/>
        <dbReference type="ChEBI" id="CHEBI:15378"/>
        <dbReference type="ChEBI" id="CHEBI:29985"/>
        <dbReference type="ChEBI" id="CHEBI:30616"/>
        <dbReference type="ChEBI" id="CHEBI:43474"/>
        <dbReference type="ChEBI" id="CHEBI:58359"/>
        <dbReference type="ChEBI" id="CHEBI:78515"/>
        <dbReference type="ChEBI" id="CHEBI:78516"/>
        <dbReference type="ChEBI" id="CHEBI:456216"/>
    </reaction>
</comment>
<comment type="subunit">
    <text evidence="1">Heterotrimer of A, B and C subunits.</text>
</comment>
<comment type="similarity">
    <text evidence="1">Belongs to the GatB/GatE family. GatB subfamily.</text>
</comment>
<protein>
    <recommendedName>
        <fullName evidence="1">Aspartyl/glutamyl-tRNA(Asn/Gln) amidotransferase subunit B</fullName>
        <shortName evidence="1">Asp/Glu-ADT subunit B</shortName>
        <ecNumber evidence="1">6.3.5.-</ecNumber>
    </recommendedName>
</protein>
<reference key="1">
    <citation type="submission" date="2007-06" db="EMBL/GenBank/DDBJ databases">
        <title>Complete sequence of Methanococcus maripaludis C7.</title>
        <authorList>
            <consortium name="US DOE Joint Genome Institute"/>
            <person name="Copeland A."/>
            <person name="Lucas S."/>
            <person name="Lapidus A."/>
            <person name="Barry K."/>
            <person name="Glavina del Rio T."/>
            <person name="Dalin E."/>
            <person name="Tice H."/>
            <person name="Pitluck S."/>
            <person name="Clum A."/>
            <person name="Schmutz J."/>
            <person name="Larimer F."/>
            <person name="Land M."/>
            <person name="Hauser L."/>
            <person name="Kyrpides N."/>
            <person name="Anderson I."/>
            <person name="Sieprawska-Lupa M."/>
            <person name="Whitman W.B."/>
            <person name="Richardson P."/>
        </authorList>
    </citation>
    <scope>NUCLEOTIDE SEQUENCE [LARGE SCALE GENOMIC DNA]</scope>
    <source>
        <strain>C7 / ATCC BAA-1331</strain>
    </source>
</reference>
<sequence length="469" mass="53209">MSEDLSMKCGLEIHVQVDTNSKLFCQCPTNYKDVEPNTNICPVCIGHPGAKPMPPNKKAIDMAIMVAKMLGCEMVIDKDIYFQRKHYNYPDLPSGYQKTSVPIGEHGTFLGVGITEVHLEEDPGQYKPDLGTVDYNRSGTPLIEIVTDPDMKSPEEAREFLRQLLRLFRYIGNLRGEGTMRADTNISIKYNGIQGNRVEVKNVNSIRGVYKVLKYELIRQKNVLRRGGEIKLETRAFMESQMITKGMRSKETADDYRYIPDPDLQPIVLSNDWVEKVEAQMPETPMNKEKRFVEQYGIKEDDAKVLVSDLELADVFEKVVAELGNDKDGISLAVTWIRNELKRVLVYNKIEFFETNLKPEHMVELINSIKDKTISQKIGKTIIEQMVEHKGEKTPKELISEMGLTVIEDTSELEKACEEAIKNSEKAIEDYKSGNQRALNSVVGQVMKLTRGRAEPGTVVEILKKKIDG</sequence>
<organism>
    <name type="scientific">Methanococcus maripaludis (strain C7 / ATCC BAA-1331)</name>
    <dbReference type="NCBI Taxonomy" id="426368"/>
    <lineage>
        <taxon>Archaea</taxon>
        <taxon>Methanobacteriati</taxon>
        <taxon>Methanobacteriota</taxon>
        <taxon>Methanomada group</taxon>
        <taxon>Methanococci</taxon>
        <taxon>Methanococcales</taxon>
        <taxon>Methanococcaceae</taxon>
        <taxon>Methanococcus</taxon>
    </lineage>
</organism>
<proteinExistence type="inferred from homology"/>
<keyword id="KW-0067">ATP-binding</keyword>
<keyword id="KW-0436">Ligase</keyword>
<keyword id="KW-0547">Nucleotide-binding</keyword>
<keyword id="KW-0648">Protein biosynthesis</keyword>
<feature type="chain" id="PRO_1000015996" description="Aspartyl/glutamyl-tRNA(Asn/Gln) amidotransferase subunit B">
    <location>
        <begin position="1"/>
        <end position="469"/>
    </location>
</feature>
<name>GATB_METM7</name>
<dbReference type="EC" id="6.3.5.-" evidence="1"/>
<dbReference type="EMBL" id="CP000745">
    <property type="protein sequence ID" value="ABR65263.1"/>
    <property type="molecule type" value="Genomic_DNA"/>
</dbReference>
<dbReference type="SMR" id="A6VFN7"/>
<dbReference type="STRING" id="426368.MmarC7_0193"/>
<dbReference type="KEGG" id="mmz:MmarC7_0193"/>
<dbReference type="eggNOG" id="arCOG01718">
    <property type="taxonomic scope" value="Archaea"/>
</dbReference>
<dbReference type="HOGENOM" id="CLU_019240_0_0_2"/>
<dbReference type="OrthoDB" id="52755at2157"/>
<dbReference type="GO" id="GO:0050566">
    <property type="term" value="F:asparaginyl-tRNA synthase (glutamine-hydrolyzing) activity"/>
    <property type="evidence" value="ECO:0007669"/>
    <property type="project" value="RHEA"/>
</dbReference>
<dbReference type="GO" id="GO:0005524">
    <property type="term" value="F:ATP binding"/>
    <property type="evidence" value="ECO:0007669"/>
    <property type="project" value="UniProtKB-KW"/>
</dbReference>
<dbReference type="GO" id="GO:0050567">
    <property type="term" value="F:glutaminyl-tRNA synthase (glutamine-hydrolyzing) activity"/>
    <property type="evidence" value="ECO:0007669"/>
    <property type="project" value="UniProtKB-UniRule"/>
</dbReference>
<dbReference type="GO" id="GO:0070681">
    <property type="term" value="P:glutaminyl-tRNAGln biosynthesis via transamidation"/>
    <property type="evidence" value="ECO:0007669"/>
    <property type="project" value="TreeGrafter"/>
</dbReference>
<dbReference type="GO" id="GO:0006412">
    <property type="term" value="P:translation"/>
    <property type="evidence" value="ECO:0007669"/>
    <property type="project" value="UniProtKB-UniRule"/>
</dbReference>
<dbReference type="FunFam" id="1.10.10.410:FF:000001">
    <property type="entry name" value="Aspartyl/glutamyl-tRNA(Asn/Gln) amidotransferase subunit B"/>
    <property type="match status" value="1"/>
</dbReference>
<dbReference type="Gene3D" id="1.10.10.410">
    <property type="match status" value="1"/>
</dbReference>
<dbReference type="Gene3D" id="1.10.150.380">
    <property type="entry name" value="GatB domain, N-terminal subdomain"/>
    <property type="match status" value="1"/>
</dbReference>
<dbReference type="HAMAP" id="MF_00121">
    <property type="entry name" value="GatB"/>
    <property type="match status" value="1"/>
</dbReference>
<dbReference type="InterPro" id="IPR017959">
    <property type="entry name" value="Asn/Gln-tRNA_amidoTrfase_suB/E"/>
</dbReference>
<dbReference type="InterPro" id="IPR006075">
    <property type="entry name" value="Asn/Gln-tRNA_Trfase_suB/E_cat"/>
</dbReference>
<dbReference type="InterPro" id="IPR018027">
    <property type="entry name" value="Asn/Gln_amidotransferase"/>
</dbReference>
<dbReference type="InterPro" id="IPR003789">
    <property type="entry name" value="Asn/Gln_tRNA_amidoTrase-B-like"/>
</dbReference>
<dbReference type="InterPro" id="IPR004413">
    <property type="entry name" value="GatB"/>
</dbReference>
<dbReference type="InterPro" id="IPR042114">
    <property type="entry name" value="GatB_C_1"/>
</dbReference>
<dbReference type="InterPro" id="IPR023168">
    <property type="entry name" value="GatB_Yqey_C_2"/>
</dbReference>
<dbReference type="InterPro" id="IPR017958">
    <property type="entry name" value="Gln-tRNA_amidoTrfase_suB_CS"/>
</dbReference>
<dbReference type="InterPro" id="IPR014746">
    <property type="entry name" value="Gln_synth/guanido_kin_cat_dom"/>
</dbReference>
<dbReference type="NCBIfam" id="TIGR00133">
    <property type="entry name" value="gatB"/>
    <property type="match status" value="1"/>
</dbReference>
<dbReference type="NCBIfam" id="NF004012">
    <property type="entry name" value="PRK05477.1-2"/>
    <property type="match status" value="1"/>
</dbReference>
<dbReference type="NCBIfam" id="NF004014">
    <property type="entry name" value="PRK05477.1-4"/>
    <property type="match status" value="1"/>
</dbReference>
<dbReference type="PANTHER" id="PTHR11659">
    <property type="entry name" value="GLUTAMYL-TRNA GLN AMIDOTRANSFERASE SUBUNIT B MITOCHONDRIAL AND PROKARYOTIC PET112-RELATED"/>
    <property type="match status" value="1"/>
</dbReference>
<dbReference type="PANTHER" id="PTHR11659:SF0">
    <property type="entry name" value="GLUTAMYL-TRNA(GLN) AMIDOTRANSFERASE SUBUNIT B, MITOCHONDRIAL"/>
    <property type="match status" value="1"/>
</dbReference>
<dbReference type="Pfam" id="PF02934">
    <property type="entry name" value="GatB_N"/>
    <property type="match status" value="1"/>
</dbReference>
<dbReference type="Pfam" id="PF02637">
    <property type="entry name" value="GatB_Yqey"/>
    <property type="match status" value="1"/>
</dbReference>
<dbReference type="SMART" id="SM00845">
    <property type="entry name" value="GatB_Yqey"/>
    <property type="match status" value="1"/>
</dbReference>
<dbReference type="SUPFAM" id="SSF89095">
    <property type="entry name" value="GatB/YqeY motif"/>
    <property type="match status" value="1"/>
</dbReference>
<dbReference type="SUPFAM" id="SSF55931">
    <property type="entry name" value="Glutamine synthetase/guanido kinase"/>
    <property type="match status" value="1"/>
</dbReference>
<dbReference type="PROSITE" id="PS01234">
    <property type="entry name" value="GATB"/>
    <property type="match status" value="1"/>
</dbReference>
<evidence type="ECO:0000255" key="1">
    <source>
        <dbReference type="HAMAP-Rule" id="MF_00121"/>
    </source>
</evidence>